<name>Y3645_XANCB</name>
<gene>
    <name type="ordered locus">xcc-b100_3645</name>
</gene>
<accession>B0RVB9</accession>
<evidence type="ECO:0000255" key="1">
    <source>
        <dbReference type="HAMAP-Rule" id="MF_00048"/>
    </source>
</evidence>
<proteinExistence type="inferred from homology"/>
<organism>
    <name type="scientific">Xanthomonas campestris pv. campestris (strain B100)</name>
    <dbReference type="NCBI Taxonomy" id="509169"/>
    <lineage>
        <taxon>Bacteria</taxon>
        <taxon>Pseudomonadati</taxon>
        <taxon>Pseudomonadota</taxon>
        <taxon>Gammaproteobacteria</taxon>
        <taxon>Lysobacterales</taxon>
        <taxon>Lysobacteraceae</taxon>
        <taxon>Xanthomonas</taxon>
    </lineage>
</organism>
<sequence>MPAARQQRGAAVEAAARAQLEQAGLRLVAGNANYRGGELDLVMRDGPMLVFVEVRYRRDARFGGGAASVDFRKRRKLVLAAQLFLAAHPALAALPCRFDVVEASGEPPLLHWIRDAFRLDDC</sequence>
<dbReference type="EMBL" id="AM920689">
    <property type="protein sequence ID" value="CAP53010.1"/>
    <property type="molecule type" value="Genomic_DNA"/>
</dbReference>
<dbReference type="SMR" id="B0RVB9"/>
<dbReference type="KEGG" id="xca:xcc-b100_3645"/>
<dbReference type="HOGENOM" id="CLU_115353_1_0_6"/>
<dbReference type="Proteomes" id="UP000001188">
    <property type="component" value="Chromosome"/>
</dbReference>
<dbReference type="GO" id="GO:0003676">
    <property type="term" value="F:nucleic acid binding"/>
    <property type="evidence" value="ECO:0007669"/>
    <property type="project" value="InterPro"/>
</dbReference>
<dbReference type="Gene3D" id="3.40.1350.10">
    <property type="match status" value="1"/>
</dbReference>
<dbReference type="HAMAP" id="MF_00048">
    <property type="entry name" value="UPF0102"/>
    <property type="match status" value="1"/>
</dbReference>
<dbReference type="InterPro" id="IPR011335">
    <property type="entry name" value="Restrct_endonuc-II-like"/>
</dbReference>
<dbReference type="InterPro" id="IPR011856">
    <property type="entry name" value="tRNA_endonuc-like_dom_sf"/>
</dbReference>
<dbReference type="InterPro" id="IPR003509">
    <property type="entry name" value="UPF0102_YraN-like"/>
</dbReference>
<dbReference type="NCBIfam" id="NF009150">
    <property type="entry name" value="PRK12497.1-3"/>
    <property type="match status" value="1"/>
</dbReference>
<dbReference type="NCBIfam" id="TIGR00252">
    <property type="entry name" value="YraN family protein"/>
    <property type="match status" value="1"/>
</dbReference>
<dbReference type="PANTHER" id="PTHR34039">
    <property type="entry name" value="UPF0102 PROTEIN YRAN"/>
    <property type="match status" value="1"/>
</dbReference>
<dbReference type="PANTHER" id="PTHR34039:SF1">
    <property type="entry name" value="UPF0102 PROTEIN YRAN"/>
    <property type="match status" value="1"/>
</dbReference>
<dbReference type="Pfam" id="PF02021">
    <property type="entry name" value="UPF0102"/>
    <property type="match status" value="1"/>
</dbReference>
<dbReference type="SUPFAM" id="SSF52980">
    <property type="entry name" value="Restriction endonuclease-like"/>
    <property type="match status" value="1"/>
</dbReference>
<protein>
    <recommendedName>
        <fullName evidence="1">UPF0102 protein xcc-b100_3645</fullName>
    </recommendedName>
</protein>
<feature type="chain" id="PRO_0000336285" description="UPF0102 protein xcc-b100_3645">
    <location>
        <begin position="1"/>
        <end position="122"/>
    </location>
</feature>
<comment type="similarity">
    <text evidence="1">Belongs to the UPF0102 family.</text>
</comment>
<reference key="1">
    <citation type="journal article" date="2008" name="J. Biotechnol.">
        <title>The genome of Xanthomonas campestris pv. campestris B100 and its use for the reconstruction of metabolic pathways involved in xanthan biosynthesis.</title>
        <authorList>
            <person name="Vorhoelter F.-J."/>
            <person name="Schneiker S."/>
            <person name="Goesmann A."/>
            <person name="Krause L."/>
            <person name="Bekel T."/>
            <person name="Kaiser O."/>
            <person name="Linke B."/>
            <person name="Patschkowski T."/>
            <person name="Rueckert C."/>
            <person name="Schmid J."/>
            <person name="Sidhu V.K."/>
            <person name="Sieber V."/>
            <person name="Tauch A."/>
            <person name="Watt S.A."/>
            <person name="Weisshaar B."/>
            <person name="Becker A."/>
            <person name="Niehaus K."/>
            <person name="Puehler A."/>
        </authorList>
    </citation>
    <scope>NUCLEOTIDE SEQUENCE [LARGE SCALE GENOMIC DNA]</scope>
    <source>
        <strain>B100</strain>
    </source>
</reference>